<name>RPOB_SHESW</name>
<dbReference type="EC" id="2.7.7.6" evidence="1"/>
<dbReference type="EMBL" id="CP000503">
    <property type="protein sequence ID" value="ABM23002.1"/>
    <property type="molecule type" value="Genomic_DNA"/>
</dbReference>
<dbReference type="RefSeq" id="WP_011787567.1">
    <property type="nucleotide sequence ID" value="NC_008750.1"/>
</dbReference>
<dbReference type="SMR" id="A1REA7"/>
<dbReference type="GeneID" id="67441753"/>
<dbReference type="KEGG" id="shw:Sputw3181_0149"/>
<dbReference type="HOGENOM" id="CLU_000524_4_3_6"/>
<dbReference type="Proteomes" id="UP000002597">
    <property type="component" value="Chromosome"/>
</dbReference>
<dbReference type="GO" id="GO:0000428">
    <property type="term" value="C:DNA-directed RNA polymerase complex"/>
    <property type="evidence" value="ECO:0007669"/>
    <property type="project" value="UniProtKB-KW"/>
</dbReference>
<dbReference type="GO" id="GO:0003677">
    <property type="term" value="F:DNA binding"/>
    <property type="evidence" value="ECO:0007669"/>
    <property type="project" value="UniProtKB-UniRule"/>
</dbReference>
<dbReference type="GO" id="GO:0003899">
    <property type="term" value="F:DNA-directed RNA polymerase activity"/>
    <property type="evidence" value="ECO:0007669"/>
    <property type="project" value="UniProtKB-UniRule"/>
</dbReference>
<dbReference type="GO" id="GO:0032549">
    <property type="term" value="F:ribonucleoside binding"/>
    <property type="evidence" value="ECO:0007669"/>
    <property type="project" value="InterPro"/>
</dbReference>
<dbReference type="GO" id="GO:0006351">
    <property type="term" value="P:DNA-templated transcription"/>
    <property type="evidence" value="ECO:0007669"/>
    <property type="project" value="UniProtKB-UniRule"/>
</dbReference>
<dbReference type="CDD" id="cd00653">
    <property type="entry name" value="RNA_pol_B_RPB2"/>
    <property type="match status" value="1"/>
</dbReference>
<dbReference type="FunFam" id="2.40.270.10:FF:000003">
    <property type="entry name" value="DNA-directed RNA polymerase subunit beta"/>
    <property type="match status" value="1"/>
</dbReference>
<dbReference type="FunFam" id="2.40.270.10:FF:000004">
    <property type="entry name" value="DNA-directed RNA polymerase subunit beta"/>
    <property type="match status" value="1"/>
</dbReference>
<dbReference type="FunFam" id="2.40.50.100:FF:000006">
    <property type="entry name" value="DNA-directed RNA polymerase subunit beta"/>
    <property type="match status" value="1"/>
</dbReference>
<dbReference type="FunFam" id="2.40.50.150:FF:000001">
    <property type="entry name" value="DNA-directed RNA polymerase subunit beta"/>
    <property type="match status" value="1"/>
</dbReference>
<dbReference type="FunFam" id="3.90.1100.10:FF:000002">
    <property type="entry name" value="DNA-directed RNA polymerase subunit beta"/>
    <property type="match status" value="1"/>
</dbReference>
<dbReference type="FunFam" id="3.90.1110.10:FF:000001">
    <property type="entry name" value="DNA-directed RNA polymerase subunit beta"/>
    <property type="match status" value="1"/>
</dbReference>
<dbReference type="FunFam" id="3.90.1110.10:FF:000004">
    <property type="entry name" value="DNA-directed RNA polymerase subunit beta"/>
    <property type="match status" value="1"/>
</dbReference>
<dbReference type="FunFam" id="3.90.1800.10:FF:000001">
    <property type="entry name" value="DNA-directed RNA polymerase subunit beta"/>
    <property type="match status" value="1"/>
</dbReference>
<dbReference type="Gene3D" id="2.40.50.100">
    <property type="match status" value="1"/>
</dbReference>
<dbReference type="Gene3D" id="2.40.50.150">
    <property type="match status" value="1"/>
</dbReference>
<dbReference type="Gene3D" id="3.90.1100.10">
    <property type="match status" value="2"/>
</dbReference>
<dbReference type="Gene3D" id="2.30.150.10">
    <property type="entry name" value="DNA-directed RNA polymerase, beta subunit, external 1 domain"/>
    <property type="match status" value="1"/>
</dbReference>
<dbReference type="Gene3D" id="2.40.270.10">
    <property type="entry name" value="DNA-directed RNA polymerase, subunit 2, domain 6"/>
    <property type="match status" value="2"/>
</dbReference>
<dbReference type="Gene3D" id="3.90.1800.10">
    <property type="entry name" value="RNA polymerase alpha subunit dimerisation domain"/>
    <property type="match status" value="1"/>
</dbReference>
<dbReference type="Gene3D" id="3.90.1110.10">
    <property type="entry name" value="RNA polymerase Rpb2, domain 2"/>
    <property type="match status" value="2"/>
</dbReference>
<dbReference type="HAMAP" id="MF_01321">
    <property type="entry name" value="RNApol_bact_RpoB"/>
    <property type="match status" value="1"/>
</dbReference>
<dbReference type="InterPro" id="IPR042107">
    <property type="entry name" value="DNA-dir_RNA_pol_bsu_ext_1_sf"/>
</dbReference>
<dbReference type="InterPro" id="IPR019462">
    <property type="entry name" value="DNA-dir_RNA_pol_bsu_external_1"/>
</dbReference>
<dbReference type="InterPro" id="IPR015712">
    <property type="entry name" value="DNA-dir_RNA_pol_su2"/>
</dbReference>
<dbReference type="InterPro" id="IPR007120">
    <property type="entry name" value="DNA-dir_RNAP_su2_dom"/>
</dbReference>
<dbReference type="InterPro" id="IPR037033">
    <property type="entry name" value="DNA-dir_RNAP_su2_hyb_sf"/>
</dbReference>
<dbReference type="InterPro" id="IPR010243">
    <property type="entry name" value="RNA_pol_bsu_bac"/>
</dbReference>
<dbReference type="InterPro" id="IPR007121">
    <property type="entry name" value="RNA_pol_bsu_CS"/>
</dbReference>
<dbReference type="InterPro" id="IPR007644">
    <property type="entry name" value="RNA_pol_bsu_protrusion"/>
</dbReference>
<dbReference type="InterPro" id="IPR007642">
    <property type="entry name" value="RNA_pol_Rpb2_2"/>
</dbReference>
<dbReference type="InterPro" id="IPR037034">
    <property type="entry name" value="RNA_pol_Rpb2_2_sf"/>
</dbReference>
<dbReference type="InterPro" id="IPR007645">
    <property type="entry name" value="RNA_pol_Rpb2_3"/>
</dbReference>
<dbReference type="InterPro" id="IPR007641">
    <property type="entry name" value="RNA_pol_Rpb2_7"/>
</dbReference>
<dbReference type="InterPro" id="IPR014724">
    <property type="entry name" value="RNA_pol_RPB2_OB-fold"/>
</dbReference>
<dbReference type="NCBIfam" id="NF001616">
    <property type="entry name" value="PRK00405.1"/>
    <property type="match status" value="1"/>
</dbReference>
<dbReference type="NCBIfam" id="TIGR02013">
    <property type="entry name" value="rpoB"/>
    <property type="match status" value="1"/>
</dbReference>
<dbReference type="PANTHER" id="PTHR20856">
    <property type="entry name" value="DNA-DIRECTED RNA POLYMERASE I SUBUNIT 2"/>
    <property type="match status" value="1"/>
</dbReference>
<dbReference type="Pfam" id="PF04563">
    <property type="entry name" value="RNA_pol_Rpb2_1"/>
    <property type="match status" value="1"/>
</dbReference>
<dbReference type="Pfam" id="PF04561">
    <property type="entry name" value="RNA_pol_Rpb2_2"/>
    <property type="match status" value="2"/>
</dbReference>
<dbReference type="Pfam" id="PF04565">
    <property type="entry name" value="RNA_pol_Rpb2_3"/>
    <property type="match status" value="1"/>
</dbReference>
<dbReference type="Pfam" id="PF10385">
    <property type="entry name" value="RNA_pol_Rpb2_45"/>
    <property type="match status" value="1"/>
</dbReference>
<dbReference type="Pfam" id="PF00562">
    <property type="entry name" value="RNA_pol_Rpb2_6"/>
    <property type="match status" value="1"/>
</dbReference>
<dbReference type="Pfam" id="PF04560">
    <property type="entry name" value="RNA_pol_Rpb2_7"/>
    <property type="match status" value="1"/>
</dbReference>
<dbReference type="SUPFAM" id="SSF64484">
    <property type="entry name" value="beta and beta-prime subunits of DNA dependent RNA-polymerase"/>
    <property type="match status" value="1"/>
</dbReference>
<dbReference type="PROSITE" id="PS01166">
    <property type="entry name" value="RNA_POL_BETA"/>
    <property type="match status" value="1"/>
</dbReference>
<keyword id="KW-0240">DNA-directed RNA polymerase</keyword>
<keyword id="KW-0548">Nucleotidyltransferase</keyword>
<keyword id="KW-0804">Transcription</keyword>
<keyword id="KW-0808">Transferase</keyword>
<accession>A1REA7</accession>
<gene>
    <name evidence="1" type="primary">rpoB</name>
    <name type="ordered locus">Sputw3181_0149</name>
</gene>
<organism>
    <name type="scientific">Shewanella sp. (strain W3-18-1)</name>
    <dbReference type="NCBI Taxonomy" id="351745"/>
    <lineage>
        <taxon>Bacteria</taxon>
        <taxon>Pseudomonadati</taxon>
        <taxon>Pseudomonadota</taxon>
        <taxon>Gammaproteobacteria</taxon>
        <taxon>Alteromonadales</taxon>
        <taxon>Shewanellaceae</taxon>
        <taxon>Shewanella</taxon>
    </lineage>
</organism>
<proteinExistence type="inferred from homology"/>
<evidence type="ECO:0000255" key="1">
    <source>
        <dbReference type="HAMAP-Rule" id="MF_01321"/>
    </source>
</evidence>
<protein>
    <recommendedName>
        <fullName evidence="1">DNA-directed RNA polymerase subunit beta</fullName>
        <shortName evidence="1">RNAP subunit beta</shortName>
        <ecNumber evidence="1">2.7.7.6</ecNumber>
    </recommendedName>
    <alternativeName>
        <fullName evidence="1">RNA polymerase subunit beta</fullName>
    </alternativeName>
    <alternativeName>
        <fullName evidence="1">Transcriptase subunit beta</fullName>
    </alternativeName>
</protein>
<feature type="chain" id="PRO_0000300403" description="DNA-directed RNA polymerase subunit beta">
    <location>
        <begin position="1"/>
        <end position="1343"/>
    </location>
</feature>
<comment type="function">
    <text evidence="1">DNA-dependent RNA polymerase catalyzes the transcription of DNA into RNA using the four ribonucleoside triphosphates as substrates.</text>
</comment>
<comment type="catalytic activity">
    <reaction evidence="1">
        <text>RNA(n) + a ribonucleoside 5'-triphosphate = RNA(n+1) + diphosphate</text>
        <dbReference type="Rhea" id="RHEA:21248"/>
        <dbReference type="Rhea" id="RHEA-COMP:14527"/>
        <dbReference type="Rhea" id="RHEA-COMP:17342"/>
        <dbReference type="ChEBI" id="CHEBI:33019"/>
        <dbReference type="ChEBI" id="CHEBI:61557"/>
        <dbReference type="ChEBI" id="CHEBI:140395"/>
        <dbReference type="EC" id="2.7.7.6"/>
    </reaction>
</comment>
<comment type="subunit">
    <text evidence="1">The RNAP catalytic core consists of 2 alpha, 1 beta, 1 beta' and 1 omega subunit. When a sigma factor is associated with the core the holoenzyme is formed, which can initiate transcription.</text>
</comment>
<comment type="similarity">
    <text evidence="1">Belongs to the RNA polymerase beta chain family.</text>
</comment>
<sequence length="1343" mass="150213">MVYSYSEKKRIRKDFGKRPQVLDIPYLLSIQLDSFKKFTDQDPTGERGLEAAFRSVFPIKSFSGNSELQYVSYKLGEPVFDVKECQIRGVTYSAPLRVKLRMVLYDREAAAGTVKDIKEQEVYMGDIPLMTDNGTFVINGTERVIVSQLHRSPGVFFDHDRGKTHSSGKVLYNARIIPYRGSWLDFEFDPKDALFVRIDRRRKLPATIILRALEYSTQEILDLFFERVEFKIKKDTLVMALVPERLRGETASYDIKDAEGSVLVEAGRRITARHIRQLEKTNTTELEVPVEYIVGKYAAQDYIDPDTGEVLVSANSEISLEDLAKLSLAGIKDISTLYINELDHGAYISDTLRIDSTTNRLEALVEIYRMMRPGEPPTKDAAEALFQNLFFSEERYDLSKVGRMKFNRRLSIPDDEGSGVLSKEDIVAVMKNIIHIRNGFDEVDDIDHLGNRRIRSVGEMAENQFRVGLVRVERAVRERLSLGDLNELMPQDLINAKPISAAVKEFFGSSQLSQFMDQNNPLSEVTHKRRISALGPGGLTRERAGFEVRDVHPTHYGRLCPIETPEGPNIGLINSLASFARTNSYGFLETPYRKVIDGVITDEVEYLSAIEEGRYVIAQANIEVDANGRMVEEQIACRHKGESTFMRASDIQYMDVSPQQIISVAASLIPFLEHDDANRALMGANMQRQAVPTLRSEKPLVGTGIERTLAVDSGVVVVAKRGGYIDYVDASRIVVKVNEDELRPGEAGIDIYNLTKYTRSNQNTCINQRPCCAVGEPVVRGDVLADGPSTDLGDLALGQNMRIAFMPWNGYNFEDSILISERVAQEDRFTTIHIQELSCIARDTKLGSEEITADIPNVGESALSKLDESGIVYIGAEVKGGDILVGKVTPKGETQLTPEEKLLRAIFGEKASDVKDSSLRVPNSVKGTIIDVQVFTRDGVEKDKRAVEIEEMHIAQARKDLSEEFKILEEGVLSRARNLLLGAGFTETQIAAMPRKDVLVQVIDDEAKQTELEQLAEQHEELKADFDKKFEIKRRKITQGDDLAPGVLKIVKVYLAVKRTIQPGDKMAGRHGNKGVISKICPIEDMPYDEQGNPVDIVLNPLGVPSRMNIGQVLEVHMGAAAKGIGNKITAMLEEQRELAEVRGYIKQVYELGDEVQQRVDIDSFTDDEVMRLAQNLKGGIPIATPAFDGAKEKEIKQMLELAGLPTSGQLKLYDGRTGNEFERQVTVGYMYMLKLNHLVDDKMHARSTGSYSLVTQQPLGGKAQFGGQRFGEMEVWALEAYGAAYTLQEMLTVKSDDVNGRTQMYKNIVDGNHQMQPGMPESFNVLLKEIRSLGINIELDQE</sequence>
<reference key="1">
    <citation type="submission" date="2006-12" db="EMBL/GenBank/DDBJ databases">
        <title>Complete sequence of Shewanella sp. W3-18-1.</title>
        <authorList>
            <consortium name="US DOE Joint Genome Institute"/>
            <person name="Copeland A."/>
            <person name="Lucas S."/>
            <person name="Lapidus A."/>
            <person name="Barry K."/>
            <person name="Detter J.C."/>
            <person name="Glavina del Rio T."/>
            <person name="Hammon N."/>
            <person name="Israni S."/>
            <person name="Dalin E."/>
            <person name="Tice H."/>
            <person name="Pitluck S."/>
            <person name="Chain P."/>
            <person name="Malfatti S."/>
            <person name="Shin M."/>
            <person name="Vergez L."/>
            <person name="Schmutz J."/>
            <person name="Larimer F."/>
            <person name="Land M."/>
            <person name="Hauser L."/>
            <person name="Kyrpides N."/>
            <person name="Lykidis A."/>
            <person name="Tiedje J."/>
            <person name="Richardson P."/>
        </authorList>
    </citation>
    <scope>NUCLEOTIDE SEQUENCE [LARGE SCALE GENOMIC DNA]</scope>
    <source>
        <strain>W3-18-1</strain>
    </source>
</reference>